<organismHost>
    <name type="scientific">Ornithodoros</name>
    <name type="common">relapsing fever ticks</name>
    <dbReference type="NCBI Taxonomy" id="6937"/>
</organismHost>
<organismHost>
    <name type="scientific">Phacochoerus aethiopicus</name>
    <name type="common">Warthog</name>
    <dbReference type="NCBI Taxonomy" id="85517"/>
</organismHost>
<organismHost>
    <name type="scientific">Phacochoerus africanus</name>
    <name type="common">Warthog</name>
    <dbReference type="NCBI Taxonomy" id="41426"/>
</organismHost>
<organismHost>
    <name type="scientific">Potamochoerus larvatus</name>
    <name type="common">Bushpig</name>
    <dbReference type="NCBI Taxonomy" id="273792"/>
</organismHost>
<organismHost>
    <name type="scientific">Sus scrofa</name>
    <name type="common">Pig</name>
    <dbReference type="NCBI Taxonomy" id="9823"/>
</organismHost>
<keyword id="KW-0021">Allosteric enzyme</keyword>
<keyword id="KW-0067">ATP-binding</keyword>
<keyword id="KW-0215">Deoxyribonucleotide synthesis</keyword>
<keyword id="KW-1015">Disulfide bond</keyword>
<keyword id="KW-0244">Early protein</keyword>
<keyword id="KW-0547">Nucleotide-binding</keyword>
<keyword id="KW-0560">Oxidoreductase</keyword>
<evidence type="ECO:0000250" key="1"/>
<evidence type="ECO:0000305" key="2"/>
<sequence length="779" mass="87767">MENFFIVKKLASDTYGKALNVDLDRLLQAQNKYTLQELISYCSALTILHYDYSTLAARLSVYLLHQSTASSFSEAVSLQAAQSCSRLSPQFVDVVYKYKAIFDSYIDYSRDYKLTLLGIETMKNSYLLKNKDGVIMERPQDAYMRVAIMIYGMGRVVNMKMILLTYDLLSRHVITHASPTMFNAGTKKPQLSSCFLLNVNDNLENLYDMVKTAGIISGGGGGIGLCLSGIRAKNSFISGSGLRSNGIQNYIVLQNASQCYANQGGLRPGAYAVYLELWHQDIFTFLQMPRLKGQMAEQRLNAPNLKYGLWVPDLFMEILEDQIHDRGDGTWYLFSPDQAPNLHKVFDLERSRHKNAHREFRKLYYQYVAEKRYTGVTTAKEIIKEWFKTVIQVGNPYIGFKDAINRKSNLSHVGTITNSNLCIEITIPCWEGSEAEQGVCNLAAVNLAAFIRENSYDYRGLIEAAGNVTENLDNIIDNGYYPTEATRRSNMRHRPIGIGVFGLADVFASFKMKFGSPEAIAMDEAIHAALYYGAMRRSVELAKEKGSHPSFPGSAASKGLLQPDLWVRCDDLVFSWEERVAQTTQGVLTPKKWWQLRLAAMQGVRNGYLTALMPTATSSNSTGKNECFEPFTSNLYTRRTLSGEFIVLNKYLIDDLKEINLWTEAIQQQLLNAGGSIQHILDIPAEIRERYKTSREMNQKILTKHAAARNPFVSQSMSLNYYFYEPELSQVLTVLVLGWKKGLTTGSYYCHFSPGAGTQKKIIRNSEKACSADCEACLL</sequence>
<feature type="chain" id="PRO_0000355219" description="Ribonucleoside-diphosphate reductase large subunit">
    <location>
        <begin position="1"/>
        <end position="779"/>
    </location>
</feature>
<feature type="active site" description="Proton acceptor" evidence="1">
    <location>
        <position position="420"/>
    </location>
</feature>
<feature type="active site" description="Cysteine radical intermediate" evidence="1">
    <location>
        <position position="422"/>
    </location>
</feature>
<feature type="active site" description="Proton acceptor" evidence="1">
    <location>
        <position position="424"/>
    </location>
</feature>
<feature type="binding site" evidence="1">
    <location>
        <position position="178"/>
    </location>
    <ligand>
        <name>substrate</name>
    </ligand>
</feature>
<feature type="binding site" evidence="1">
    <location>
        <begin position="193"/>
        <end position="194"/>
    </location>
    <ligand>
        <name>substrate</name>
    </ligand>
</feature>
<feature type="binding site" evidence="1">
    <location>
        <position position="222"/>
    </location>
    <ligand>
        <name>substrate</name>
    </ligand>
</feature>
<feature type="binding site" evidence="1">
    <location>
        <begin position="420"/>
        <end position="424"/>
    </location>
    <ligand>
        <name>substrate</name>
    </ligand>
</feature>
<feature type="binding site" evidence="1">
    <location>
        <begin position="614"/>
        <end position="618"/>
    </location>
    <ligand>
        <name>substrate</name>
    </ligand>
</feature>
<feature type="site" description="Important for hydrogen atom transfer" evidence="1">
    <location>
        <position position="194"/>
    </location>
</feature>
<feature type="site" description="Allosteric effector binding" evidence="1">
    <location>
        <position position="201"/>
    </location>
</feature>
<feature type="site" description="Allosteric effector binding" evidence="1">
    <location>
        <position position="231"/>
    </location>
</feature>
<feature type="site" description="Important for hydrogen atom transfer" evidence="1">
    <location>
        <position position="440"/>
    </location>
</feature>
<feature type="site" description="Important for electron transfer" evidence="1">
    <location>
        <position position="748"/>
    </location>
</feature>
<feature type="site" description="Important for electron transfer" evidence="1">
    <location>
        <position position="749"/>
    </location>
</feature>
<feature type="site" description="Interacts with thioredoxin/glutaredoxin" evidence="1">
    <location>
        <position position="774"/>
    </location>
</feature>
<feature type="site" description="Interacts with thioredoxin/glutaredoxin" evidence="1">
    <location>
        <position position="777"/>
    </location>
</feature>
<feature type="disulfide bond" description="Redox-active" evidence="1">
    <location>
        <begin position="194"/>
        <end position="440"/>
    </location>
</feature>
<proteinExistence type="inferred from homology"/>
<protein>
    <recommendedName>
        <fullName>Ribonucleoside-diphosphate reductase large subunit</fullName>
        <ecNumber>1.17.4.1</ecNumber>
    </recommendedName>
    <alternativeName>
        <fullName>Ribonucleotide reductase large subunit</fullName>
    </alternativeName>
</protein>
<accession>P0C8H7</accession>
<gene>
    <name type="ordered locus">Ken-057</name>
</gene>
<dbReference type="EC" id="1.17.4.1"/>
<dbReference type="EMBL" id="AY261360">
    <property type="status" value="NOT_ANNOTATED_CDS"/>
    <property type="molecule type" value="Genomic_DNA"/>
</dbReference>
<dbReference type="SMR" id="P0C8H7"/>
<dbReference type="Proteomes" id="UP000000861">
    <property type="component" value="Segment"/>
</dbReference>
<dbReference type="GO" id="GO:0005524">
    <property type="term" value="F:ATP binding"/>
    <property type="evidence" value="ECO:0007669"/>
    <property type="project" value="UniProtKB-KW"/>
</dbReference>
<dbReference type="GO" id="GO:0004748">
    <property type="term" value="F:ribonucleoside-diphosphate reductase activity, thioredoxin disulfide as acceptor"/>
    <property type="evidence" value="ECO:0007669"/>
    <property type="project" value="UniProtKB-EC"/>
</dbReference>
<dbReference type="GO" id="GO:0009263">
    <property type="term" value="P:deoxyribonucleotide biosynthetic process"/>
    <property type="evidence" value="ECO:0007669"/>
    <property type="project" value="UniProtKB-KW"/>
</dbReference>
<dbReference type="Gene3D" id="3.20.70.20">
    <property type="match status" value="1"/>
</dbReference>
<dbReference type="InterPro" id="IPR013346">
    <property type="entry name" value="NrdE_NrdA_C"/>
</dbReference>
<dbReference type="InterPro" id="IPR000788">
    <property type="entry name" value="RNR_lg_C"/>
</dbReference>
<dbReference type="InterPro" id="IPR013509">
    <property type="entry name" value="RNR_lsu_N"/>
</dbReference>
<dbReference type="InterPro" id="IPR008926">
    <property type="entry name" value="RNR_R1-su_N"/>
</dbReference>
<dbReference type="InterPro" id="IPR039718">
    <property type="entry name" value="Rrm1"/>
</dbReference>
<dbReference type="NCBIfam" id="TIGR02506">
    <property type="entry name" value="NrdE_NrdA"/>
    <property type="match status" value="1"/>
</dbReference>
<dbReference type="PANTHER" id="PTHR11573">
    <property type="entry name" value="RIBONUCLEOSIDE-DIPHOSPHATE REDUCTASE LARGE CHAIN"/>
    <property type="match status" value="1"/>
</dbReference>
<dbReference type="PANTHER" id="PTHR11573:SF6">
    <property type="entry name" value="RIBONUCLEOSIDE-DIPHOSPHATE REDUCTASE LARGE SUBUNIT"/>
    <property type="match status" value="1"/>
</dbReference>
<dbReference type="Pfam" id="PF02867">
    <property type="entry name" value="Ribonuc_red_lgC"/>
    <property type="match status" value="1"/>
</dbReference>
<dbReference type="Pfam" id="PF00317">
    <property type="entry name" value="Ribonuc_red_lgN"/>
    <property type="match status" value="1"/>
</dbReference>
<dbReference type="PRINTS" id="PR01183">
    <property type="entry name" value="RIBORDTASEM1"/>
</dbReference>
<dbReference type="SUPFAM" id="SSF51998">
    <property type="entry name" value="PFL-like glycyl radical enzymes"/>
    <property type="match status" value="1"/>
</dbReference>
<dbReference type="SUPFAM" id="SSF48168">
    <property type="entry name" value="R1 subunit of ribonucleotide reductase, N-terminal domain"/>
    <property type="match status" value="1"/>
</dbReference>
<dbReference type="PROSITE" id="PS00089">
    <property type="entry name" value="RIBORED_LARGE"/>
    <property type="match status" value="1"/>
</dbReference>
<comment type="function">
    <text evidence="1">Ribonucleoside-diphosphate reductase holoenzyme provides the precursors necessary for viral DNA synthesis. Allows virus growth in non-dividing cells. Catalyzes the biosynthesis of deoxyribonucleotides from the corresponding ribonucleotides (By similarity).</text>
</comment>
<comment type="catalytic activity">
    <reaction>
        <text>a 2'-deoxyribonucleoside 5'-diphosphate + [thioredoxin]-disulfide + H2O = a ribonucleoside 5'-diphosphate + [thioredoxin]-dithiol</text>
        <dbReference type="Rhea" id="RHEA:23252"/>
        <dbReference type="Rhea" id="RHEA-COMP:10698"/>
        <dbReference type="Rhea" id="RHEA-COMP:10700"/>
        <dbReference type="ChEBI" id="CHEBI:15377"/>
        <dbReference type="ChEBI" id="CHEBI:29950"/>
        <dbReference type="ChEBI" id="CHEBI:50058"/>
        <dbReference type="ChEBI" id="CHEBI:57930"/>
        <dbReference type="ChEBI" id="CHEBI:73316"/>
        <dbReference type="EC" id="1.17.4.1"/>
    </reaction>
</comment>
<comment type="activity regulation">
    <text evidence="1">Under complex allosteric control mediated by deoxynucleoside triphosphates and ATP binding. The type of nucleotide bound at the specificity site determines substrate preference. It seems probable that ATP makes the enzyme reduce CDP and UDP, dGTP favors ADP reduction and dTTP favors GDP reduction (By similarity).</text>
</comment>
<comment type="subunit">
    <text evidence="1">Heterotetramer composed of a homodimer of the large subunit (R1) and a homodimer of the small subunit (R2). Larger multisubunit protein complex are also active, composed of (R1)n(R2)n (By similarity).</text>
</comment>
<comment type="induction">
    <text evidence="2">Expressed in the early phase of the viral replicative cycle.</text>
</comment>
<comment type="similarity">
    <text evidence="2">Belongs to the ribonucleoside diphosphate reductase large chain family.</text>
</comment>
<organism>
    <name type="scientific">African swine fever virus (isolate Pig/Kenya/KEN-50/1950)</name>
    <name type="common">ASFV</name>
    <dbReference type="NCBI Taxonomy" id="561445"/>
    <lineage>
        <taxon>Viruses</taxon>
        <taxon>Varidnaviria</taxon>
        <taxon>Bamfordvirae</taxon>
        <taxon>Nucleocytoviricota</taxon>
        <taxon>Pokkesviricetes</taxon>
        <taxon>Asfuvirales</taxon>
        <taxon>Asfarviridae</taxon>
        <taxon>Asfivirus</taxon>
        <taxon>African swine fever virus</taxon>
    </lineage>
</organism>
<name>RIR1_ASFK5</name>
<reference key="1">
    <citation type="submission" date="2003-03" db="EMBL/GenBank/DDBJ databases">
        <title>African swine fever virus genomes.</title>
        <authorList>
            <person name="Kutish G.F."/>
            <person name="Rock D.L."/>
        </authorList>
    </citation>
    <scope>NUCLEOTIDE SEQUENCE [LARGE SCALE GENOMIC DNA]</scope>
</reference>